<keyword id="KW-0687">Ribonucleoprotein</keyword>
<keyword id="KW-0689">Ribosomal protein</keyword>
<feature type="chain" id="PRO_1000007030" description="Large ribosomal subunit protein bL12">
    <location>
        <begin position="1"/>
        <end position="121"/>
    </location>
</feature>
<protein>
    <recommendedName>
        <fullName evidence="1">Large ribosomal subunit protein bL12</fullName>
    </recommendedName>
    <alternativeName>
        <fullName evidence="2">50S ribosomal protein L7/L12</fullName>
    </alternativeName>
</protein>
<dbReference type="EMBL" id="AM406671">
    <property type="protein sequence ID" value="CAL97800.1"/>
    <property type="molecule type" value="Genomic_DNA"/>
</dbReference>
<dbReference type="RefSeq" id="WP_011676194.1">
    <property type="nucleotide sequence ID" value="NC_009004.1"/>
</dbReference>
<dbReference type="SMR" id="A2RKI9"/>
<dbReference type="STRING" id="416870.llmg_1208"/>
<dbReference type="GeneID" id="61109519"/>
<dbReference type="KEGG" id="llm:llmg_1208"/>
<dbReference type="eggNOG" id="COG0222">
    <property type="taxonomic scope" value="Bacteria"/>
</dbReference>
<dbReference type="HOGENOM" id="CLU_086499_3_2_9"/>
<dbReference type="OrthoDB" id="9811748at2"/>
<dbReference type="PhylomeDB" id="A2RKI9"/>
<dbReference type="Proteomes" id="UP000000364">
    <property type="component" value="Chromosome"/>
</dbReference>
<dbReference type="GO" id="GO:0022625">
    <property type="term" value="C:cytosolic large ribosomal subunit"/>
    <property type="evidence" value="ECO:0007669"/>
    <property type="project" value="TreeGrafter"/>
</dbReference>
<dbReference type="GO" id="GO:0003729">
    <property type="term" value="F:mRNA binding"/>
    <property type="evidence" value="ECO:0007669"/>
    <property type="project" value="TreeGrafter"/>
</dbReference>
<dbReference type="GO" id="GO:0003735">
    <property type="term" value="F:structural constituent of ribosome"/>
    <property type="evidence" value="ECO:0007669"/>
    <property type="project" value="InterPro"/>
</dbReference>
<dbReference type="GO" id="GO:0006412">
    <property type="term" value="P:translation"/>
    <property type="evidence" value="ECO:0007669"/>
    <property type="project" value="UniProtKB-UniRule"/>
</dbReference>
<dbReference type="CDD" id="cd00387">
    <property type="entry name" value="Ribosomal_L7_L12"/>
    <property type="match status" value="1"/>
</dbReference>
<dbReference type="FunFam" id="3.30.1390.10:FF:000001">
    <property type="entry name" value="50S ribosomal protein L7/L12"/>
    <property type="match status" value="1"/>
</dbReference>
<dbReference type="Gene3D" id="3.30.1390.10">
    <property type="match status" value="1"/>
</dbReference>
<dbReference type="Gene3D" id="1.20.5.710">
    <property type="entry name" value="Single helix bin"/>
    <property type="match status" value="1"/>
</dbReference>
<dbReference type="HAMAP" id="MF_00368">
    <property type="entry name" value="Ribosomal_bL12"/>
    <property type="match status" value="1"/>
</dbReference>
<dbReference type="InterPro" id="IPR000206">
    <property type="entry name" value="Ribosomal_bL12"/>
</dbReference>
<dbReference type="InterPro" id="IPR013823">
    <property type="entry name" value="Ribosomal_bL12_C"/>
</dbReference>
<dbReference type="InterPro" id="IPR014719">
    <property type="entry name" value="Ribosomal_bL12_C/ClpS-like"/>
</dbReference>
<dbReference type="InterPro" id="IPR008932">
    <property type="entry name" value="Ribosomal_bL12_oligo"/>
</dbReference>
<dbReference type="InterPro" id="IPR036235">
    <property type="entry name" value="Ribosomal_bL12_oligo_N_sf"/>
</dbReference>
<dbReference type="NCBIfam" id="TIGR00855">
    <property type="entry name" value="L12"/>
    <property type="match status" value="1"/>
</dbReference>
<dbReference type="PANTHER" id="PTHR45987">
    <property type="entry name" value="39S RIBOSOMAL PROTEIN L12"/>
    <property type="match status" value="1"/>
</dbReference>
<dbReference type="PANTHER" id="PTHR45987:SF4">
    <property type="entry name" value="LARGE RIBOSOMAL SUBUNIT PROTEIN BL12M"/>
    <property type="match status" value="1"/>
</dbReference>
<dbReference type="Pfam" id="PF00542">
    <property type="entry name" value="Ribosomal_L12"/>
    <property type="match status" value="1"/>
</dbReference>
<dbReference type="Pfam" id="PF16320">
    <property type="entry name" value="Ribosomal_L12_N"/>
    <property type="match status" value="1"/>
</dbReference>
<dbReference type="SUPFAM" id="SSF54736">
    <property type="entry name" value="ClpS-like"/>
    <property type="match status" value="1"/>
</dbReference>
<dbReference type="SUPFAM" id="SSF48300">
    <property type="entry name" value="Ribosomal protein L7/12, oligomerisation (N-terminal) domain"/>
    <property type="match status" value="1"/>
</dbReference>
<reference key="1">
    <citation type="journal article" date="2007" name="J. Bacteriol.">
        <title>The complete genome sequence of the lactic acid bacterial paradigm Lactococcus lactis subsp. cremoris MG1363.</title>
        <authorList>
            <person name="Wegmann U."/>
            <person name="O'Connell-Motherway M."/>
            <person name="Zomer A."/>
            <person name="Buist G."/>
            <person name="Shearman C."/>
            <person name="Canchaya C."/>
            <person name="Ventura M."/>
            <person name="Goesmann A."/>
            <person name="Gasson M.J."/>
            <person name="Kuipers O.P."/>
            <person name="van Sinderen D."/>
            <person name="Kok J."/>
        </authorList>
    </citation>
    <scope>NUCLEOTIDE SEQUENCE [LARGE SCALE GENOMIC DNA]</scope>
    <source>
        <strain>MG1363</strain>
    </source>
</reference>
<sequence length="121" mass="12374">MALNIENIVAELENATILELSELVKAIEEKFDVTAAAPVAAAAGAGEAAAAKDSFDVELTAAGDKKVAVIKEVRGITGLGLKEAKELVDGAPTVVKEGLSESEANEIKEKLEAAGASITLK</sequence>
<evidence type="ECO:0000255" key="1">
    <source>
        <dbReference type="HAMAP-Rule" id="MF_00368"/>
    </source>
</evidence>
<evidence type="ECO:0000305" key="2"/>
<comment type="function">
    <text evidence="1">Forms part of the ribosomal stalk which helps the ribosome interact with GTP-bound translation factors. Is thus essential for accurate translation.</text>
</comment>
<comment type="subunit">
    <text evidence="1">Homodimer. Part of the ribosomal stalk of the 50S ribosomal subunit. Forms a multimeric L10(L12)X complex, where L10 forms an elongated spine to which 2 to 4 L12 dimers bind in a sequential fashion. Binds GTP-bound translation factors.</text>
</comment>
<comment type="similarity">
    <text evidence="1">Belongs to the bacterial ribosomal protein bL12 family.</text>
</comment>
<accession>A2RKI9</accession>
<proteinExistence type="inferred from homology"/>
<name>RL7_LACLM</name>
<gene>
    <name evidence="1" type="primary">rplL</name>
    <name type="ordered locus">llmg_1208</name>
</gene>
<organism>
    <name type="scientific">Lactococcus lactis subsp. cremoris (strain MG1363)</name>
    <dbReference type="NCBI Taxonomy" id="416870"/>
    <lineage>
        <taxon>Bacteria</taxon>
        <taxon>Bacillati</taxon>
        <taxon>Bacillota</taxon>
        <taxon>Bacilli</taxon>
        <taxon>Lactobacillales</taxon>
        <taxon>Streptococcaceae</taxon>
        <taxon>Lactococcus</taxon>
        <taxon>Lactococcus cremoris subsp. cremoris</taxon>
    </lineage>
</organism>